<feature type="chain" id="PRO_0000072327" description="Ceramide-binding protein SVF1">
    <location>
        <begin position="1"/>
        <end position="382"/>
    </location>
</feature>
<feature type="region of interest" description="Peripherally associates with membranes" evidence="1">
    <location>
        <begin position="1"/>
        <end position="18"/>
    </location>
</feature>
<keyword id="KW-0963">Cytoplasm</keyword>
<keyword id="KW-0256">Endoplasmic reticulum</keyword>
<keyword id="KW-0333">Golgi apparatus</keyword>
<keyword id="KW-0445">Lipid transport</keyword>
<keyword id="KW-0472">Membrane</keyword>
<keyword id="KW-0539">Nucleus</keyword>
<keyword id="KW-1185">Reference proteome</keyword>
<keyword id="KW-0813">Transport</keyword>
<name>SVF1_CANAL</name>
<evidence type="ECO:0000250" key="1">
    <source>
        <dbReference type="UniProtKB" id="Q05515"/>
    </source>
</evidence>
<evidence type="ECO:0000305" key="2"/>
<comment type="function">
    <text evidence="1">Ceramide-binding protein that may transfer ceramides from the endoplasmic reticulum membrane to the cis-Golgi network membrane, and is thereby required for the biosynthesis of complex sphingolipids.</text>
</comment>
<comment type="subcellular location">
    <subcellularLocation>
        <location evidence="1">Golgi apparatus</location>
        <location evidence="1">cis-Golgi network membrane</location>
        <topology evidence="1">Peripheral membrane protein</topology>
    </subcellularLocation>
    <subcellularLocation>
        <location evidence="1">Endoplasmic reticulum membrane</location>
        <topology evidence="1">Peripheral membrane protein</topology>
    </subcellularLocation>
    <subcellularLocation>
        <location evidence="1">Cytoplasm</location>
    </subcellularLocation>
    <subcellularLocation>
        <location evidence="1">Nucleus</location>
    </subcellularLocation>
    <text evidence="1">Localizes to the interface between the cis-Golgi network and endoplasmic reticulum exit sites.</text>
</comment>
<comment type="similarity">
    <text evidence="2">Belongs to the SVF1 family.</text>
</comment>
<organism>
    <name type="scientific">Candida albicans (strain SC5314 / ATCC MYA-2876)</name>
    <name type="common">Yeast</name>
    <dbReference type="NCBI Taxonomy" id="237561"/>
    <lineage>
        <taxon>Eukaryota</taxon>
        <taxon>Fungi</taxon>
        <taxon>Dikarya</taxon>
        <taxon>Ascomycota</taxon>
        <taxon>Saccharomycotina</taxon>
        <taxon>Pichiomycetes</taxon>
        <taxon>Debaryomycetaceae</taxon>
        <taxon>Candida/Lodderomyces clade</taxon>
        <taxon>Candida</taxon>
    </lineage>
</organism>
<proteinExistence type="inferred from homology"/>
<protein>
    <recommendedName>
        <fullName evidence="2">Ceramide-binding protein SVF1</fullName>
    </recommendedName>
    <alternativeName>
        <fullName>Survival factor 1</fullName>
    </alternativeName>
</protein>
<accession>Q5ABA2</accession>
<accession>A0A1D8PC78</accession>
<sequence>MLKWVQSGLSAVAGTAEPEYGPDAIQPITKRIFDTNNGKIYRATEPKDFEWLSPNYTNVETQTFYFTDLSNGNIGFAQIIHSNVMGLTTTAQFTFRLYNVKDKSINLWTSTKLEDFEIKDSNFYAKDLSLELKDNKVYKLKSSVNKESIVEFEMERLTDGVIFGDDGMSFYGEDPEQPWGSMRHVFWPRCKVNGTITTADNKVIEINNGLTMFVMALQGMKPHHAAKSWNFMNFQSANHSAVQMEFTTPKSYGTTKVNIGIVTDNEKILIASIDNQVVHSDTKFDDVGGWDVPQKIEFNYIDGKDKDKQVASVSGNLSQLVERVDVMAEIPQFVKNIVSGVAGARPYIYQYANEFTIDINNGDGEKVKEDGVGFTEVTFISD</sequence>
<dbReference type="EMBL" id="CP017623">
    <property type="protein sequence ID" value="AOW25738.1"/>
    <property type="molecule type" value="Genomic_DNA"/>
</dbReference>
<dbReference type="RefSeq" id="XP_719030.1">
    <property type="nucleotide sequence ID" value="XM_713937.1"/>
</dbReference>
<dbReference type="FunCoup" id="Q5ABA2">
    <property type="interactions" value="124"/>
</dbReference>
<dbReference type="STRING" id="237561.Q5ABA2"/>
<dbReference type="EnsemblFungi" id="C1_00400W_A-T">
    <property type="protein sequence ID" value="C1_00400W_A-T-p1"/>
    <property type="gene ID" value="C1_00400W_A"/>
</dbReference>
<dbReference type="GeneID" id="3639289"/>
<dbReference type="KEGG" id="cal:CAALFM_C100400WA"/>
<dbReference type="CGD" id="CAL0000182395">
    <property type="gene designation" value="SVF1"/>
</dbReference>
<dbReference type="VEuPathDB" id="FungiDB:C1_00400W_A"/>
<dbReference type="eggNOG" id="ENOG502QQY3">
    <property type="taxonomic scope" value="Eukaryota"/>
</dbReference>
<dbReference type="HOGENOM" id="CLU_030205_2_0_1"/>
<dbReference type="InParanoid" id="Q5ABA2"/>
<dbReference type="OMA" id="AFWPRCV"/>
<dbReference type="OrthoDB" id="2590239at2759"/>
<dbReference type="PRO" id="PR:Q5ABA2"/>
<dbReference type="Proteomes" id="UP000000559">
    <property type="component" value="Chromosome 1"/>
</dbReference>
<dbReference type="GO" id="GO:0033106">
    <property type="term" value="C:cis-Golgi network membrane"/>
    <property type="evidence" value="ECO:0000250"/>
    <property type="project" value="UniProtKB"/>
</dbReference>
<dbReference type="GO" id="GO:0005737">
    <property type="term" value="C:cytoplasm"/>
    <property type="evidence" value="ECO:0000250"/>
    <property type="project" value="UniProtKB"/>
</dbReference>
<dbReference type="GO" id="GO:0005789">
    <property type="term" value="C:endoplasmic reticulum membrane"/>
    <property type="evidence" value="ECO:0007669"/>
    <property type="project" value="UniProtKB-SubCell"/>
</dbReference>
<dbReference type="GO" id="GO:0005634">
    <property type="term" value="C:nucleus"/>
    <property type="evidence" value="ECO:0007669"/>
    <property type="project" value="UniProtKB-SubCell"/>
</dbReference>
<dbReference type="GO" id="GO:0097001">
    <property type="term" value="F:ceramide binding"/>
    <property type="evidence" value="ECO:0000250"/>
    <property type="project" value="UniProtKB"/>
</dbReference>
<dbReference type="GO" id="GO:0035621">
    <property type="term" value="P:ER to Golgi ceramide transport"/>
    <property type="evidence" value="ECO:0000250"/>
    <property type="project" value="UniProtKB"/>
</dbReference>
<dbReference type="GO" id="GO:0006979">
    <property type="term" value="P:response to oxidative stress"/>
    <property type="evidence" value="ECO:0007669"/>
    <property type="project" value="InterPro"/>
</dbReference>
<dbReference type="InterPro" id="IPR051385">
    <property type="entry name" value="Ceramide-binding_SVF1"/>
</dbReference>
<dbReference type="InterPro" id="IPR033394">
    <property type="entry name" value="Svf1-like_C"/>
</dbReference>
<dbReference type="InterPro" id="IPR013931">
    <property type="entry name" value="Svf1-like_N"/>
</dbReference>
<dbReference type="PANTHER" id="PTHR47107:SF1">
    <property type="entry name" value="CERAMIDE-BINDING PROTEIN SVF1-RELATED"/>
    <property type="match status" value="1"/>
</dbReference>
<dbReference type="PANTHER" id="PTHR47107">
    <property type="entry name" value="SVF1-LIKE PROTEIN YDR222W-RELATED"/>
    <property type="match status" value="1"/>
</dbReference>
<dbReference type="Pfam" id="PF08622">
    <property type="entry name" value="Svf1"/>
    <property type="match status" value="1"/>
</dbReference>
<dbReference type="Pfam" id="PF17187">
    <property type="entry name" value="Svf1_C"/>
    <property type="match status" value="1"/>
</dbReference>
<dbReference type="SUPFAM" id="SSF159245">
    <property type="entry name" value="AttH-like"/>
    <property type="match status" value="1"/>
</dbReference>
<reference key="1">
    <citation type="journal article" date="2004" name="Proc. Natl. Acad. Sci. U.S.A.">
        <title>The diploid genome sequence of Candida albicans.</title>
        <authorList>
            <person name="Jones T."/>
            <person name="Federspiel N.A."/>
            <person name="Chibana H."/>
            <person name="Dungan J."/>
            <person name="Kalman S."/>
            <person name="Magee B.B."/>
            <person name="Newport G."/>
            <person name="Thorstenson Y.R."/>
            <person name="Agabian N."/>
            <person name="Magee P.T."/>
            <person name="Davis R.W."/>
            <person name="Scherer S."/>
        </authorList>
    </citation>
    <scope>NUCLEOTIDE SEQUENCE [LARGE SCALE GENOMIC DNA]</scope>
    <source>
        <strain>SC5314 / ATCC MYA-2876</strain>
    </source>
</reference>
<reference key="2">
    <citation type="journal article" date="2007" name="Genome Biol.">
        <title>Assembly of the Candida albicans genome into sixteen supercontigs aligned on the eight chromosomes.</title>
        <authorList>
            <person name="van het Hoog M."/>
            <person name="Rast T.J."/>
            <person name="Martchenko M."/>
            <person name="Grindle S."/>
            <person name="Dignard D."/>
            <person name="Hogues H."/>
            <person name="Cuomo C."/>
            <person name="Berriman M."/>
            <person name="Scherer S."/>
            <person name="Magee B.B."/>
            <person name="Whiteway M."/>
            <person name="Chibana H."/>
            <person name="Nantel A."/>
            <person name="Magee P.T."/>
        </authorList>
    </citation>
    <scope>GENOME REANNOTATION</scope>
    <source>
        <strain>SC5314 / ATCC MYA-2876</strain>
    </source>
</reference>
<reference key="3">
    <citation type="journal article" date="2013" name="Genome Biol.">
        <title>Assembly of a phased diploid Candida albicans genome facilitates allele-specific measurements and provides a simple model for repeat and indel structure.</title>
        <authorList>
            <person name="Muzzey D."/>
            <person name="Schwartz K."/>
            <person name="Weissman J.S."/>
            <person name="Sherlock G."/>
        </authorList>
    </citation>
    <scope>NUCLEOTIDE SEQUENCE [LARGE SCALE GENOMIC DNA]</scope>
    <scope>GENOME REANNOTATION</scope>
    <source>
        <strain>SC5314 / ATCC MYA-2876</strain>
    </source>
</reference>
<gene>
    <name type="primary">SVF1</name>
    <name type="ordered locus">CAALFM_C100400WA</name>
    <name type="ORF">CaO19.13489</name>
    <name type="ORF">CaO19.6068</name>
</gene>